<keyword id="KW-1185">Reference proteome</keyword>
<name>VG21_ICHVA</name>
<organismHost>
    <name type="scientific">Ictaluridae</name>
    <name type="common">bullhead catfishes</name>
    <dbReference type="NCBI Taxonomy" id="7996"/>
</organismHost>
<proteinExistence type="predicted"/>
<reference key="1">
    <citation type="journal article" date="1992" name="Virology">
        <title>Channel catfish virus: a new type of herpesvirus.</title>
        <authorList>
            <person name="Davison A.J."/>
        </authorList>
    </citation>
    <scope>NUCLEOTIDE SEQUENCE [LARGE SCALE GENOMIC DNA]</scope>
</reference>
<sequence>MSATQGPLTEAANGCDDTGLGKTKNHWDGAVPRTTGEPRSLLGENRASSVLTTGLGPKPGPVWVDPRIRFHGVSESLPLTDTPWGPPPSPMDALGHGVMTPSGLKWCPPPPPKTESRSFLELLAMHQKAQADRDDTVTGETETTAREEDDVIFVEETNVNNPDVIEVIELKDVTETGHGTLKRRYPMRVRRAPKRLVLDEQVVDDYPADSDDDTDAESDDAMSVLSDTCRTDDDASSVSSCGSFITDGSGSEESEDSASDETDDSDFDTDELTSESEEEESESESESESESESESE</sequence>
<gene>
    <name type="primary">ORF21</name>
</gene>
<dbReference type="EMBL" id="M75136">
    <property type="protein sequence ID" value="AAA88124.1"/>
    <property type="molecule type" value="Genomic_DNA"/>
</dbReference>
<dbReference type="PIR" id="D36788">
    <property type="entry name" value="D36788"/>
</dbReference>
<dbReference type="RefSeq" id="NP_041112.1">
    <property type="nucleotide sequence ID" value="NC_001493.2"/>
</dbReference>
<dbReference type="GeneID" id="1488401"/>
<dbReference type="KEGG" id="vg:1488401"/>
<dbReference type="Proteomes" id="UP000007643">
    <property type="component" value="Segment"/>
</dbReference>
<organism>
    <name type="scientific">Ictalurid herpesvirus 1 (strain Auburn)</name>
    <name type="common">IcHV-1</name>
    <name type="synonym">Channel catfish herpesvirus</name>
    <dbReference type="NCBI Taxonomy" id="766178"/>
    <lineage>
        <taxon>Viruses</taxon>
        <taxon>Duplodnaviria</taxon>
        <taxon>Heunggongvirae</taxon>
        <taxon>Peploviricota</taxon>
        <taxon>Herviviricetes</taxon>
        <taxon>Herpesvirales</taxon>
        <taxon>Alloherpesviridae</taxon>
        <taxon>Ictavirus</taxon>
        <taxon>Ictavirus ictaluridallo1</taxon>
        <taxon>Ictalurid herpesvirus 1</taxon>
    </lineage>
</organism>
<accession>Q00114</accession>
<evidence type="ECO:0000256" key="1">
    <source>
        <dbReference type="SAM" id="MobiDB-lite"/>
    </source>
</evidence>
<feature type="chain" id="PRO_0000222104" description="Uncharacterized protein ORF21">
    <location>
        <begin position="1"/>
        <end position="296"/>
    </location>
</feature>
<feature type="region of interest" description="Disordered" evidence="1">
    <location>
        <begin position="1"/>
        <end position="45"/>
    </location>
</feature>
<feature type="region of interest" description="Disordered" evidence="1">
    <location>
        <begin position="200"/>
        <end position="296"/>
    </location>
</feature>
<feature type="compositionally biased region" description="Acidic residues" evidence="1">
    <location>
        <begin position="201"/>
        <end position="220"/>
    </location>
</feature>
<feature type="compositionally biased region" description="Polar residues" evidence="1">
    <location>
        <begin position="236"/>
        <end position="249"/>
    </location>
</feature>
<feature type="compositionally biased region" description="Acidic residues" evidence="1">
    <location>
        <begin position="250"/>
        <end position="296"/>
    </location>
</feature>
<protein>
    <recommendedName>
        <fullName>Uncharacterized protein ORF21</fullName>
    </recommendedName>
</protein>